<feature type="chain" id="PRO_0000378072" description="Transcription factor Sox-21-B">
    <location>
        <begin position="1"/>
        <end position="245"/>
    </location>
</feature>
<feature type="DNA-binding region" description="HMG box" evidence="2">
    <location>
        <begin position="8"/>
        <end position="76"/>
    </location>
</feature>
<protein>
    <recommendedName>
        <fullName evidence="4">Transcription factor Sox-21-B</fullName>
    </recommendedName>
    <alternativeName>
        <fullName evidence="8">SRY-box containing gene 21b</fullName>
    </alternativeName>
</protein>
<comment type="function">
    <text evidence="1">Acts as a negative regulator of transcription.</text>
</comment>
<comment type="subcellular location">
    <subcellularLocation>
        <location evidence="2">Nucleus</location>
    </subcellularLocation>
</comment>
<comment type="developmental stage">
    <text evidence="3">Expressed zygotically from the tailbud stage.</text>
</comment>
<name>SX21B_DANRE</name>
<accession>Q6RVD7</accession>
<gene>
    <name evidence="9" type="primary">sox21b</name>
    <name type="ORF">si:ch211-247e2.1</name>
    <name type="ORF">zgc:110678</name>
</gene>
<reference evidence="5 7" key="1">
    <citation type="journal article" date="2004" name="Mech. Dev.">
        <title>Ectopic expression and knockdown of a zebrafish sox21 reveal its role as a transcriptional repressor in early development.</title>
        <authorList>
            <person name="Argenton F."/>
            <person name="Giudici S."/>
            <person name="Deflorian G."/>
            <person name="Cimbro S."/>
            <person name="Cotelli F."/>
            <person name="Beltrame M."/>
        </authorList>
    </citation>
    <scope>NUCLEOTIDE SEQUENCE [MRNA]</scope>
    <scope>DEVELOPMENTAL STAGE</scope>
</reference>
<reference key="2">
    <citation type="journal article" date="2013" name="Nature">
        <title>The zebrafish reference genome sequence and its relationship to the human genome.</title>
        <authorList>
            <person name="Howe K."/>
            <person name="Clark M.D."/>
            <person name="Torroja C.F."/>
            <person name="Torrance J."/>
            <person name="Berthelot C."/>
            <person name="Muffato M."/>
            <person name="Collins J.E."/>
            <person name="Humphray S."/>
            <person name="McLaren K."/>
            <person name="Matthews L."/>
            <person name="McLaren S."/>
            <person name="Sealy I."/>
            <person name="Caccamo M."/>
            <person name="Churcher C."/>
            <person name="Scott C."/>
            <person name="Barrett J.C."/>
            <person name="Koch R."/>
            <person name="Rauch G.J."/>
            <person name="White S."/>
            <person name="Chow W."/>
            <person name="Kilian B."/>
            <person name="Quintais L.T."/>
            <person name="Guerra-Assuncao J.A."/>
            <person name="Zhou Y."/>
            <person name="Gu Y."/>
            <person name="Yen J."/>
            <person name="Vogel J.H."/>
            <person name="Eyre T."/>
            <person name="Redmond S."/>
            <person name="Banerjee R."/>
            <person name="Chi J."/>
            <person name="Fu B."/>
            <person name="Langley E."/>
            <person name="Maguire S.F."/>
            <person name="Laird G.K."/>
            <person name="Lloyd D."/>
            <person name="Kenyon E."/>
            <person name="Donaldson S."/>
            <person name="Sehra H."/>
            <person name="Almeida-King J."/>
            <person name="Loveland J."/>
            <person name="Trevanion S."/>
            <person name="Jones M."/>
            <person name="Quail M."/>
            <person name="Willey D."/>
            <person name="Hunt A."/>
            <person name="Burton J."/>
            <person name="Sims S."/>
            <person name="McLay K."/>
            <person name="Plumb B."/>
            <person name="Davis J."/>
            <person name="Clee C."/>
            <person name="Oliver K."/>
            <person name="Clark R."/>
            <person name="Riddle C."/>
            <person name="Elliot D."/>
            <person name="Threadgold G."/>
            <person name="Harden G."/>
            <person name="Ware D."/>
            <person name="Begum S."/>
            <person name="Mortimore B."/>
            <person name="Kerry G."/>
            <person name="Heath P."/>
            <person name="Phillimore B."/>
            <person name="Tracey A."/>
            <person name="Corby N."/>
            <person name="Dunn M."/>
            <person name="Johnson C."/>
            <person name="Wood J."/>
            <person name="Clark S."/>
            <person name="Pelan S."/>
            <person name="Griffiths G."/>
            <person name="Smith M."/>
            <person name="Glithero R."/>
            <person name="Howden P."/>
            <person name="Barker N."/>
            <person name="Lloyd C."/>
            <person name="Stevens C."/>
            <person name="Harley J."/>
            <person name="Holt K."/>
            <person name="Panagiotidis G."/>
            <person name="Lovell J."/>
            <person name="Beasley H."/>
            <person name="Henderson C."/>
            <person name="Gordon D."/>
            <person name="Auger K."/>
            <person name="Wright D."/>
            <person name="Collins J."/>
            <person name="Raisen C."/>
            <person name="Dyer L."/>
            <person name="Leung K."/>
            <person name="Robertson L."/>
            <person name="Ambridge K."/>
            <person name="Leongamornlert D."/>
            <person name="McGuire S."/>
            <person name="Gilderthorp R."/>
            <person name="Griffiths C."/>
            <person name="Manthravadi D."/>
            <person name="Nichol S."/>
            <person name="Barker G."/>
            <person name="Whitehead S."/>
            <person name="Kay M."/>
            <person name="Brown J."/>
            <person name="Murnane C."/>
            <person name="Gray E."/>
            <person name="Humphries M."/>
            <person name="Sycamore N."/>
            <person name="Barker D."/>
            <person name="Saunders D."/>
            <person name="Wallis J."/>
            <person name="Babbage A."/>
            <person name="Hammond S."/>
            <person name="Mashreghi-Mohammadi M."/>
            <person name="Barr L."/>
            <person name="Martin S."/>
            <person name="Wray P."/>
            <person name="Ellington A."/>
            <person name="Matthews N."/>
            <person name="Ellwood M."/>
            <person name="Woodmansey R."/>
            <person name="Clark G."/>
            <person name="Cooper J."/>
            <person name="Tromans A."/>
            <person name="Grafham D."/>
            <person name="Skuce C."/>
            <person name="Pandian R."/>
            <person name="Andrews R."/>
            <person name="Harrison E."/>
            <person name="Kimberley A."/>
            <person name="Garnett J."/>
            <person name="Fosker N."/>
            <person name="Hall R."/>
            <person name="Garner P."/>
            <person name="Kelly D."/>
            <person name="Bird C."/>
            <person name="Palmer S."/>
            <person name="Gehring I."/>
            <person name="Berger A."/>
            <person name="Dooley C.M."/>
            <person name="Ersan-Urun Z."/>
            <person name="Eser C."/>
            <person name="Geiger H."/>
            <person name="Geisler M."/>
            <person name="Karotki L."/>
            <person name="Kirn A."/>
            <person name="Konantz J."/>
            <person name="Konantz M."/>
            <person name="Oberlander M."/>
            <person name="Rudolph-Geiger S."/>
            <person name="Teucke M."/>
            <person name="Lanz C."/>
            <person name="Raddatz G."/>
            <person name="Osoegawa K."/>
            <person name="Zhu B."/>
            <person name="Rapp A."/>
            <person name="Widaa S."/>
            <person name="Langford C."/>
            <person name="Yang F."/>
            <person name="Schuster S.C."/>
            <person name="Carter N.P."/>
            <person name="Harrow J."/>
            <person name="Ning Z."/>
            <person name="Herrero J."/>
            <person name="Searle S.M."/>
            <person name="Enright A."/>
            <person name="Geisler R."/>
            <person name="Plasterk R.H."/>
            <person name="Lee C."/>
            <person name="Westerfield M."/>
            <person name="de Jong P.J."/>
            <person name="Zon L.I."/>
            <person name="Postlethwait J.H."/>
            <person name="Nusslein-Volhard C."/>
            <person name="Hubbard T.J."/>
            <person name="Roest Crollius H."/>
            <person name="Rogers J."/>
            <person name="Stemple D.L."/>
        </authorList>
    </citation>
    <scope>NUCLEOTIDE SEQUENCE [LARGE SCALE GENOMIC DNA]</scope>
    <source>
        <strain>Tuebingen</strain>
    </source>
</reference>
<reference evidence="8" key="3">
    <citation type="submission" date="2005-05" db="EMBL/GenBank/DDBJ databases">
        <authorList>
            <consortium name="NIH - Zebrafish Gene Collection (ZGC) project"/>
        </authorList>
    </citation>
    <scope>NUCLEOTIDE SEQUENCE [LARGE SCALE MRNA]</scope>
    <source>
        <tissue evidence="6">Embryo</tissue>
    </source>
</reference>
<organism>
    <name type="scientific">Danio rerio</name>
    <name type="common">Zebrafish</name>
    <name type="synonym">Brachydanio rerio</name>
    <dbReference type="NCBI Taxonomy" id="7955"/>
    <lineage>
        <taxon>Eukaryota</taxon>
        <taxon>Metazoa</taxon>
        <taxon>Chordata</taxon>
        <taxon>Craniata</taxon>
        <taxon>Vertebrata</taxon>
        <taxon>Euteleostomi</taxon>
        <taxon>Actinopterygii</taxon>
        <taxon>Neopterygii</taxon>
        <taxon>Teleostei</taxon>
        <taxon>Ostariophysi</taxon>
        <taxon>Cypriniformes</taxon>
        <taxon>Danionidae</taxon>
        <taxon>Danioninae</taxon>
        <taxon>Danio</taxon>
    </lineage>
</organism>
<evidence type="ECO:0000250" key="1">
    <source>
        <dbReference type="UniProtKB" id="Q7SZS1"/>
    </source>
</evidence>
<evidence type="ECO:0000255" key="2">
    <source>
        <dbReference type="PROSITE-ProRule" id="PRU00267"/>
    </source>
</evidence>
<evidence type="ECO:0000269" key="3">
    <source>
    </source>
</evidence>
<evidence type="ECO:0000303" key="4">
    <source>
    </source>
</evidence>
<evidence type="ECO:0000305" key="5"/>
<evidence type="ECO:0000312" key="6">
    <source>
        <dbReference type="EMBL" id="AAH95366.1"/>
    </source>
</evidence>
<evidence type="ECO:0000312" key="7">
    <source>
        <dbReference type="EMBL" id="AAS47833.1"/>
    </source>
</evidence>
<evidence type="ECO:0000312" key="8">
    <source>
        <dbReference type="EMBL" id="CAX12766.1"/>
    </source>
</evidence>
<evidence type="ECO:0000312" key="9">
    <source>
        <dbReference type="ZFIN" id="ZDB-GENE-040429-1"/>
    </source>
</evidence>
<sequence length="245" mass="26801">MSKPMDHVKRPMNAFMVWSRAQRRKMAQENPKMHNSEISKRLGAEWKLLTESEKRPFIDEAKRLRAMHMKEHPDYKYRPRRKPKTLMKKDKFAFPVAYNLGEHEALKVGGLPAGALTESLMSNPDKAAAAAAAAAARVFFNPSMSANPYSFFDLGSKMTELSPPSFSYASPLGYPTAATAFSGAVGGGAHTHTHSHPSPGNPGYMIPCNCAAWPSAGLQPPLAYILLPGMGKPQLEPYPAYAAAL</sequence>
<proteinExistence type="evidence at transcript level"/>
<keyword id="KW-0238">DNA-binding</keyword>
<keyword id="KW-0539">Nucleus</keyword>
<keyword id="KW-1185">Reference proteome</keyword>
<keyword id="KW-0678">Repressor</keyword>
<keyword id="KW-0804">Transcription</keyword>
<keyword id="KW-0805">Transcription regulation</keyword>
<dbReference type="EMBL" id="AY489186">
    <property type="protein sequence ID" value="AAS47833.1"/>
    <property type="molecule type" value="mRNA"/>
</dbReference>
<dbReference type="EMBL" id="CT027987">
    <property type="protein sequence ID" value="CAX12766.1"/>
    <property type="molecule type" value="Genomic_DNA"/>
</dbReference>
<dbReference type="EMBL" id="BC095366">
    <property type="protein sequence ID" value="AAH95366.1"/>
    <property type="molecule type" value="mRNA"/>
</dbReference>
<dbReference type="RefSeq" id="NP_001009888.1">
    <property type="nucleotide sequence ID" value="NM_001009888.2"/>
</dbReference>
<dbReference type="SMR" id="Q6RVD7"/>
<dbReference type="FunCoup" id="Q6RVD7">
    <property type="interactions" value="19"/>
</dbReference>
<dbReference type="STRING" id="7955.ENSDARP00000023480"/>
<dbReference type="PaxDb" id="7955-ENSDARP00000023480"/>
<dbReference type="Ensembl" id="ENSDART00000003310">
    <property type="protein sequence ID" value="ENSDARP00000023480"/>
    <property type="gene ID" value="ENSDARG00000008540"/>
</dbReference>
<dbReference type="GeneID" id="406246"/>
<dbReference type="KEGG" id="dre:406246"/>
<dbReference type="AGR" id="ZFIN:ZDB-GENE-040429-1"/>
<dbReference type="CTD" id="406246"/>
<dbReference type="ZFIN" id="ZDB-GENE-040429-1">
    <property type="gene designation" value="sox21b"/>
</dbReference>
<dbReference type="eggNOG" id="KOG0527">
    <property type="taxonomic scope" value="Eukaryota"/>
</dbReference>
<dbReference type="HOGENOM" id="CLU_021123_3_1_1"/>
<dbReference type="InParanoid" id="Q6RVD7"/>
<dbReference type="OMA" id="LHGHEAF"/>
<dbReference type="OrthoDB" id="6247875at2759"/>
<dbReference type="PhylomeDB" id="Q6RVD7"/>
<dbReference type="TreeFam" id="TF351735"/>
<dbReference type="Reactome" id="R-DRE-3769402">
    <property type="pathway name" value="Deactivation of the beta-catenin transactivating complex"/>
</dbReference>
<dbReference type="PRO" id="PR:Q6RVD7"/>
<dbReference type="Proteomes" id="UP000000437">
    <property type="component" value="Chromosome 9"/>
</dbReference>
<dbReference type="Bgee" id="ENSDARG00000008540">
    <property type="expression patterns" value="Expressed in pharyngeal gill and 28 other cell types or tissues"/>
</dbReference>
<dbReference type="GO" id="GO:0005634">
    <property type="term" value="C:nucleus"/>
    <property type="evidence" value="ECO:0000318"/>
    <property type="project" value="GO_Central"/>
</dbReference>
<dbReference type="GO" id="GO:0001228">
    <property type="term" value="F:DNA-binding transcription activator activity, RNA polymerase II-specific"/>
    <property type="evidence" value="ECO:0000318"/>
    <property type="project" value="GO_Central"/>
</dbReference>
<dbReference type="GO" id="GO:0000978">
    <property type="term" value="F:RNA polymerase II cis-regulatory region sequence-specific DNA binding"/>
    <property type="evidence" value="ECO:0000318"/>
    <property type="project" value="GO_Central"/>
</dbReference>
<dbReference type="GO" id="GO:0043565">
    <property type="term" value="F:sequence-specific DNA binding"/>
    <property type="evidence" value="ECO:0000250"/>
    <property type="project" value="UniProtKB"/>
</dbReference>
<dbReference type="GO" id="GO:0007420">
    <property type="term" value="P:brain development"/>
    <property type="evidence" value="ECO:0000318"/>
    <property type="project" value="GO_Central"/>
</dbReference>
<dbReference type="GO" id="GO:0002088">
    <property type="term" value="P:lens development in camera-type eye"/>
    <property type="evidence" value="ECO:0000315"/>
    <property type="project" value="ZFIN"/>
</dbReference>
<dbReference type="GO" id="GO:0045892">
    <property type="term" value="P:negative regulation of DNA-templated transcription"/>
    <property type="evidence" value="ECO:0000250"/>
    <property type="project" value="UniProtKB"/>
</dbReference>
<dbReference type="GO" id="GO:0000122">
    <property type="term" value="P:negative regulation of transcription by RNA polymerase II"/>
    <property type="evidence" value="ECO:0000250"/>
    <property type="project" value="UniProtKB"/>
</dbReference>
<dbReference type="GO" id="GO:0030182">
    <property type="term" value="P:neuron differentiation"/>
    <property type="evidence" value="ECO:0000318"/>
    <property type="project" value="GO_Central"/>
</dbReference>
<dbReference type="GO" id="GO:0045944">
    <property type="term" value="P:positive regulation of transcription by RNA polymerase II"/>
    <property type="evidence" value="ECO:0000318"/>
    <property type="project" value="GO_Central"/>
</dbReference>
<dbReference type="CDD" id="cd01388">
    <property type="entry name" value="HMG-box_SoxB"/>
    <property type="match status" value="1"/>
</dbReference>
<dbReference type="FunFam" id="1.10.30.10:FF:000002">
    <property type="entry name" value="transcription factor Sox-2"/>
    <property type="match status" value="1"/>
</dbReference>
<dbReference type="Gene3D" id="1.10.30.10">
    <property type="entry name" value="High mobility group box domain"/>
    <property type="match status" value="1"/>
</dbReference>
<dbReference type="InterPro" id="IPR009071">
    <property type="entry name" value="HMG_box_dom"/>
</dbReference>
<dbReference type="InterPro" id="IPR036910">
    <property type="entry name" value="HMG_box_dom_sf"/>
</dbReference>
<dbReference type="InterPro" id="IPR022097">
    <property type="entry name" value="SOX_fam"/>
</dbReference>
<dbReference type="InterPro" id="IPR050140">
    <property type="entry name" value="SRY-related_HMG-box_TF-like"/>
</dbReference>
<dbReference type="PANTHER" id="PTHR10270">
    <property type="entry name" value="SOX TRANSCRIPTION FACTOR"/>
    <property type="match status" value="1"/>
</dbReference>
<dbReference type="PANTHER" id="PTHR10270:SF313">
    <property type="entry name" value="TRANSCRIPTION FACTOR SOX-21"/>
    <property type="match status" value="1"/>
</dbReference>
<dbReference type="Pfam" id="PF00505">
    <property type="entry name" value="HMG_box"/>
    <property type="match status" value="1"/>
</dbReference>
<dbReference type="Pfam" id="PF12336">
    <property type="entry name" value="SOXp"/>
    <property type="match status" value="1"/>
</dbReference>
<dbReference type="SMART" id="SM00398">
    <property type="entry name" value="HMG"/>
    <property type="match status" value="1"/>
</dbReference>
<dbReference type="SUPFAM" id="SSF47095">
    <property type="entry name" value="HMG-box"/>
    <property type="match status" value="1"/>
</dbReference>
<dbReference type="PROSITE" id="PS50118">
    <property type="entry name" value="HMG_BOX_2"/>
    <property type="match status" value="1"/>
</dbReference>